<keyword id="KW-1185">Reference proteome</keyword>
<keyword id="KW-0687">Ribonucleoprotein</keyword>
<keyword id="KW-0689">Ribosomal protein</keyword>
<evidence type="ECO:0000255" key="1">
    <source>
        <dbReference type="HAMAP-Rule" id="MF_00256"/>
    </source>
</evidence>
<evidence type="ECO:0000256" key="2">
    <source>
        <dbReference type="SAM" id="MobiDB-lite"/>
    </source>
</evidence>
<evidence type="ECO:0000305" key="3"/>
<proteinExistence type="inferred from homology"/>
<reference key="1">
    <citation type="journal article" date="2006" name="Science">
        <title>Genome of rice cluster I archaea -- the key methane producers in the rice rhizosphere.</title>
        <authorList>
            <person name="Erkel C."/>
            <person name="Kube M."/>
            <person name="Reinhardt R."/>
            <person name="Liesack W."/>
        </authorList>
    </citation>
    <scope>NUCLEOTIDE SEQUENCE [LARGE SCALE GENOMIC DNA]</scope>
    <source>
        <strain>DSM 22066 / NBRC 105507 / MRE50</strain>
    </source>
</reference>
<name>RL15E_METAR</name>
<protein>
    <recommendedName>
        <fullName evidence="1">Large ribosomal subunit protein eL15</fullName>
    </recommendedName>
    <alternativeName>
        <fullName evidence="3">50S ribosomal protein L15e</fullName>
    </alternativeName>
</protein>
<feature type="chain" id="PRO_0000304210" description="Large ribosomal subunit protein eL15">
    <location>
        <begin position="1"/>
        <end position="196"/>
    </location>
</feature>
<feature type="region of interest" description="Disordered" evidence="2">
    <location>
        <begin position="155"/>
        <end position="196"/>
    </location>
</feature>
<feature type="compositionally biased region" description="Basic residues" evidence="2">
    <location>
        <begin position="169"/>
        <end position="178"/>
    </location>
</feature>
<gene>
    <name evidence="1" type="primary">rpl15e</name>
    <name type="ordered locus">UNCMA_10000</name>
    <name type="ORF">RCIX2117</name>
</gene>
<dbReference type="EMBL" id="AM114193">
    <property type="protein sequence ID" value="CAJ37248.1"/>
    <property type="molecule type" value="Genomic_DNA"/>
</dbReference>
<dbReference type="RefSeq" id="WP_012035328.1">
    <property type="nucleotide sequence ID" value="NC_009464.1"/>
</dbReference>
<dbReference type="SMR" id="Q0W2Z5"/>
<dbReference type="STRING" id="351160.RCIX2117"/>
<dbReference type="GeneID" id="5142830"/>
<dbReference type="KEGG" id="rci:RCIX2117"/>
<dbReference type="PATRIC" id="fig|351160.9.peg.1033"/>
<dbReference type="eggNOG" id="arCOG04209">
    <property type="taxonomic scope" value="Archaea"/>
</dbReference>
<dbReference type="OrthoDB" id="8183at2157"/>
<dbReference type="Proteomes" id="UP000000663">
    <property type="component" value="Chromosome"/>
</dbReference>
<dbReference type="GO" id="GO:0022625">
    <property type="term" value="C:cytosolic large ribosomal subunit"/>
    <property type="evidence" value="ECO:0007669"/>
    <property type="project" value="TreeGrafter"/>
</dbReference>
<dbReference type="GO" id="GO:0003723">
    <property type="term" value="F:RNA binding"/>
    <property type="evidence" value="ECO:0007669"/>
    <property type="project" value="TreeGrafter"/>
</dbReference>
<dbReference type="GO" id="GO:0003735">
    <property type="term" value="F:structural constituent of ribosome"/>
    <property type="evidence" value="ECO:0007669"/>
    <property type="project" value="InterPro"/>
</dbReference>
<dbReference type="GO" id="GO:0002181">
    <property type="term" value="P:cytoplasmic translation"/>
    <property type="evidence" value="ECO:0007669"/>
    <property type="project" value="TreeGrafter"/>
</dbReference>
<dbReference type="FunFam" id="3.40.1120.10:FF:000002">
    <property type="entry name" value="50S ribosomal protein L15e"/>
    <property type="match status" value="1"/>
</dbReference>
<dbReference type="Gene3D" id="3.40.1120.10">
    <property type="entry name" value="Ribosomal protein l15e"/>
    <property type="match status" value="1"/>
</dbReference>
<dbReference type="HAMAP" id="MF_00256">
    <property type="entry name" value="Ribosomal_eL15"/>
    <property type="match status" value="1"/>
</dbReference>
<dbReference type="InterPro" id="IPR024794">
    <property type="entry name" value="Rbsml_eL15_core_dom_sf"/>
</dbReference>
<dbReference type="InterPro" id="IPR000439">
    <property type="entry name" value="Ribosomal_eL15"/>
</dbReference>
<dbReference type="InterPro" id="IPR020926">
    <property type="entry name" value="Ribosomal_eL15_arc"/>
</dbReference>
<dbReference type="InterPro" id="IPR012678">
    <property type="entry name" value="Ribosomal_uL23/eL15/eS24_sf"/>
</dbReference>
<dbReference type="NCBIfam" id="NF003269">
    <property type="entry name" value="PRK04243.1"/>
    <property type="match status" value="1"/>
</dbReference>
<dbReference type="PANTHER" id="PTHR11847:SF4">
    <property type="entry name" value="LARGE RIBOSOMAL SUBUNIT PROTEIN EL15"/>
    <property type="match status" value="1"/>
</dbReference>
<dbReference type="PANTHER" id="PTHR11847">
    <property type="entry name" value="RIBOSOMAL PROTEIN L15"/>
    <property type="match status" value="1"/>
</dbReference>
<dbReference type="Pfam" id="PF00827">
    <property type="entry name" value="Ribosomal_L15e"/>
    <property type="match status" value="1"/>
</dbReference>
<dbReference type="SMART" id="SM01384">
    <property type="entry name" value="Ribosomal_L15e"/>
    <property type="match status" value="1"/>
</dbReference>
<dbReference type="SUPFAM" id="SSF54189">
    <property type="entry name" value="Ribosomal proteins S24e, L23 and L15e"/>
    <property type="match status" value="1"/>
</dbReference>
<sequence>MVKSAYSYIRDAWKNPSKTYVGELFWERLQEWRKEPTVVKIDRPTRLDRARALGYKAKQGIIVARAHVRRGGRRKSRYSRGRKSKHMGLRTLTRRTSIQRMAEVRASRKFPNMEVLNSYWVGQDGKHKWYEIILVDPHHPSIASDKNLSWITKGTHRGRAERGLTSAGKKGRGQRRKGKGTEKNYPSVQAHDRRGK</sequence>
<accession>Q0W2Z5</accession>
<organism>
    <name type="scientific">Methanocella arvoryzae (strain DSM 22066 / NBRC 105507 / MRE50)</name>
    <dbReference type="NCBI Taxonomy" id="351160"/>
    <lineage>
        <taxon>Archaea</taxon>
        <taxon>Methanobacteriati</taxon>
        <taxon>Methanobacteriota</taxon>
        <taxon>Stenosarchaea group</taxon>
        <taxon>Methanomicrobia</taxon>
        <taxon>Methanocellales</taxon>
        <taxon>Methanocellaceae</taxon>
        <taxon>Methanocella</taxon>
    </lineage>
</organism>
<comment type="similarity">
    <text evidence="1">Belongs to the eukaryotic ribosomal protein eL15 family.</text>
</comment>